<proteinExistence type="inferred from homology"/>
<comment type="function">
    <text evidence="1 2">Transcriptional regulator that controls a genetic switch in male development. It is necessary and sufficient for initiating male sex determination by directing the development of supporting cell precursors (pre-Sertoli cells) as Sertoli rather than granulosa cells. Involved in different aspects of gene regulation including promoter activation or repression. Binds to the DNA consensus sequence 5'-[AT]AACAA[AT]-3'. SRY HMG box recognizes DNA by partial intercalation in the minor groove and promotes DNA bending. Also involved in pre-mRNA splicing (By similarity). In male adult brain involved in the maintenance of motor functions of dopaminergic neurons (By similarity).</text>
</comment>
<comment type="subunit">
    <text evidence="2">Interacts with CALM, EP300, HDAC3, KPNB1, ZNF208 isoform KRAB-O, PARP1, SLC9A3R2 and WT1. The interaction with EP300 modulates its DNA-binding activity. The interaction with KPNB1 is sensitive to dissociation by Ran in the GTP-bound form. Interaction with PARP1 impaired its DNA-binding activity.</text>
</comment>
<comment type="subcellular location">
    <subcellularLocation>
        <location evidence="2">Nucleus speckle</location>
    </subcellularLocation>
    <subcellularLocation>
        <location evidence="2">Cytoplasm</location>
    </subcellularLocation>
    <subcellularLocation>
        <location evidence="2">Nucleus</location>
    </subcellularLocation>
</comment>
<comment type="PTM">
    <text evidence="2">Acetylation of Lys-130 contributes to its nuclear localization and enhances its interaction with KPNB1. Deacetylated by HDAC3.</text>
</comment>
<comment type="similarity">
    <text evidence="4">Belongs to the SRY family.</text>
</comment>
<comment type="online information" name="Protein Spotlight">
    <link uri="https://www.proteinspotlight.org/back_issues/080"/>
    <text>The tenuous nature of sex - Issue 80 of March 2007</text>
</comment>
<gene>
    <name type="primary">SRY</name>
    <name type="synonym">TDF</name>
</gene>
<protein>
    <recommendedName>
        <fullName>Sex-determining region Y protein</fullName>
    </recommendedName>
    <alternativeName>
        <fullName>Testis-determining factor</fullName>
    </alternativeName>
</protein>
<reference key="1">
    <citation type="submission" date="2003-02" db="EMBL/GenBank/DDBJ databases">
        <title>SRY DNA phylogeny of red deer.</title>
        <authorList>
            <person name="Ludt C.J."/>
            <person name="Kuehn R."/>
            <person name="Schroeder W."/>
            <person name="Rottmann O."/>
        </authorList>
    </citation>
    <scope>NUCLEOTIDE SEQUENCE [GENOMIC DNA]</scope>
    <source>
        <tissue>Corpus spongiosum</tissue>
    </source>
</reference>
<accession>Q863B7</accession>
<evidence type="ECO:0000250" key="1">
    <source>
        <dbReference type="UniProtKB" id="P36394"/>
    </source>
</evidence>
<evidence type="ECO:0000250" key="2">
    <source>
        <dbReference type="UniProtKB" id="Q05066"/>
    </source>
</evidence>
<evidence type="ECO:0000255" key="3">
    <source>
        <dbReference type="PROSITE-ProRule" id="PRU00267"/>
    </source>
</evidence>
<evidence type="ECO:0000305" key="4"/>
<sequence length="229" mass="26669">MFRVLNDDVYSPAEIQQQNPLAFGKASSLFTDNRSANDQCETGENVRESGQDHVKRPMNAFIVWSRERRRKVALENPKMQNSEISKQLGYEWKRLTDAEKRPFFEEAQRLLAVHRDKYPGYKYRPRRKTKRQQKLLPADSSKLCKQMHIETLQPFTYRDGCANTTGSRMESQLSLSQSVTITNSFFQNEHHSSWTNLGHNRVTLATQISADFPFYQSLQPGLSCAYFQY</sequence>
<organism>
    <name type="scientific">Elaphurus davidianus</name>
    <name type="common">Pere David's deer</name>
    <dbReference type="NCBI Taxonomy" id="43332"/>
    <lineage>
        <taxon>Eukaryota</taxon>
        <taxon>Metazoa</taxon>
        <taxon>Chordata</taxon>
        <taxon>Craniata</taxon>
        <taxon>Vertebrata</taxon>
        <taxon>Euteleostomi</taxon>
        <taxon>Mammalia</taxon>
        <taxon>Eutheria</taxon>
        <taxon>Laurasiatheria</taxon>
        <taxon>Artiodactyla</taxon>
        <taxon>Ruminantia</taxon>
        <taxon>Pecora</taxon>
        <taxon>Cervidae</taxon>
        <taxon>Cervinae</taxon>
        <taxon>Elaphurus</taxon>
    </lineage>
</organism>
<feature type="chain" id="PRO_0000048660" description="Sex-determining region Y protein">
    <location>
        <begin position="1"/>
        <end position="229"/>
    </location>
</feature>
<feature type="DNA-binding region" description="HMG box" evidence="3">
    <location>
        <begin position="54"/>
        <end position="122"/>
    </location>
</feature>
<keyword id="KW-0007">Acetylation</keyword>
<keyword id="KW-0010">Activator</keyword>
<keyword id="KW-0112">Calmodulin-binding</keyword>
<keyword id="KW-0963">Cytoplasm</keyword>
<keyword id="KW-0221">Differentiation</keyword>
<keyword id="KW-0238">DNA-binding</keyword>
<keyword id="KW-0539">Nucleus</keyword>
<keyword id="KW-0678">Repressor</keyword>
<keyword id="KW-0726">Sexual differentiation</keyword>
<keyword id="KW-0804">Transcription</keyword>
<keyword id="KW-0805">Transcription regulation</keyword>
<dbReference type="EMBL" id="AY244501">
    <property type="protein sequence ID" value="AAO92437.1"/>
    <property type="molecule type" value="Genomic_DNA"/>
</dbReference>
<dbReference type="SMR" id="Q863B7"/>
<dbReference type="GO" id="GO:0005737">
    <property type="term" value="C:cytoplasm"/>
    <property type="evidence" value="ECO:0007669"/>
    <property type="project" value="UniProtKB-SubCell"/>
</dbReference>
<dbReference type="GO" id="GO:0016607">
    <property type="term" value="C:nuclear speck"/>
    <property type="evidence" value="ECO:0007669"/>
    <property type="project" value="UniProtKB-SubCell"/>
</dbReference>
<dbReference type="GO" id="GO:0005634">
    <property type="term" value="C:nucleus"/>
    <property type="evidence" value="ECO:0000250"/>
    <property type="project" value="UniProtKB"/>
</dbReference>
<dbReference type="GO" id="GO:0005516">
    <property type="term" value="F:calmodulin binding"/>
    <property type="evidence" value="ECO:0007669"/>
    <property type="project" value="UniProtKB-KW"/>
</dbReference>
<dbReference type="GO" id="GO:0001228">
    <property type="term" value="F:DNA-binding transcription activator activity, RNA polymerase II-specific"/>
    <property type="evidence" value="ECO:0007669"/>
    <property type="project" value="TreeGrafter"/>
</dbReference>
<dbReference type="GO" id="GO:0000978">
    <property type="term" value="F:RNA polymerase II cis-regulatory region sequence-specific DNA binding"/>
    <property type="evidence" value="ECO:0007669"/>
    <property type="project" value="TreeGrafter"/>
</dbReference>
<dbReference type="GO" id="GO:0030154">
    <property type="term" value="P:cell differentiation"/>
    <property type="evidence" value="ECO:0007669"/>
    <property type="project" value="UniProtKB-KW"/>
</dbReference>
<dbReference type="GO" id="GO:0030238">
    <property type="term" value="P:male sex determination"/>
    <property type="evidence" value="ECO:0007669"/>
    <property type="project" value="InterPro"/>
</dbReference>
<dbReference type="GO" id="GO:0007548">
    <property type="term" value="P:sex differentiation"/>
    <property type="evidence" value="ECO:0007669"/>
    <property type="project" value="UniProtKB-KW"/>
</dbReference>
<dbReference type="CDD" id="cd22028">
    <property type="entry name" value="HMG-box_SoxA_SoxB_SoxG"/>
    <property type="match status" value="1"/>
</dbReference>
<dbReference type="FunFam" id="1.10.30.10:FF:000002">
    <property type="entry name" value="transcription factor Sox-2"/>
    <property type="match status" value="1"/>
</dbReference>
<dbReference type="Gene3D" id="1.10.30.10">
    <property type="entry name" value="High mobility group box domain"/>
    <property type="match status" value="1"/>
</dbReference>
<dbReference type="InterPro" id="IPR009071">
    <property type="entry name" value="HMG_box_dom"/>
</dbReference>
<dbReference type="InterPro" id="IPR036910">
    <property type="entry name" value="HMG_box_dom_sf"/>
</dbReference>
<dbReference type="InterPro" id="IPR017253">
    <property type="entry name" value="SRY"/>
</dbReference>
<dbReference type="InterPro" id="IPR050140">
    <property type="entry name" value="SRY-related_HMG-box_TF-like"/>
</dbReference>
<dbReference type="PANTHER" id="PTHR10270:SF161">
    <property type="entry name" value="SEX-DETERMINING REGION Y PROTEIN"/>
    <property type="match status" value="1"/>
</dbReference>
<dbReference type="PANTHER" id="PTHR10270">
    <property type="entry name" value="SOX TRANSCRIPTION FACTOR"/>
    <property type="match status" value="1"/>
</dbReference>
<dbReference type="Pfam" id="PF00505">
    <property type="entry name" value="HMG_box"/>
    <property type="match status" value="1"/>
</dbReference>
<dbReference type="PIRSF" id="PIRSF037653">
    <property type="entry name" value="SRY"/>
    <property type="match status" value="1"/>
</dbReference>
<dbReference type="SMART" id="SM00398">
    <property type="entry name" value="HMG"/>
    <property type="match status" value="1"/>
</dbReference>
<dbReference type="SUPFAM" id="SSF47095">
    <property type="entry name" value="HMG-box"/>
    <property type="match status" value="1"/>
</dbReference>
<dbReference type="PROSITE" id="PS50118">
    <property type="entry name" value="HMG_BOX_2"/>
    <property type="match status" value="1"/>
</dbReference>
<name>SRY_ELADA</name>